<keyword id="KW-0002">3D-structure</keyword>
<keyword id="KW-0963">Cytoplasm</keyword>
<keyword id="KW-1185">Reference proteome</keyword>
<keyword id="KW-0831">Ubiquinone biosynthesis</keyword>
<name>UBIJ_ECOLI</name>
<accession>P0ADP7</accession>
<accession>P27852</accession>
<accession>Q2M8D9</accession>
<gene>
    <name evidence="1 5" type="primary">ubiJ</name>
    <name type="synonym">yigP</name>
    <name type="ordered locus">b3834</name>
    <name type="ordered locus">JW3811</name>
</gene>
<proteinExistence type="evidence at protein level"/>
<dbReference type="EMBL" id="M87049">
    <property type="protein sequence ID" value="AAA67629.1"/>
    <property type="molecule type" value="Genomic_DNA"/>
</dbReference>
<dbReference type="EMBL" id="U00096">
    <property type="protein sequence ID" value="AAC76837.1"/>
    <property type="molecule type" value="Genomic_DNA"/>
</dbReference>
<dbReference type="EMBL" id="AP009048">
    <property type="protein sequence ID" value="BAE77467.1"/>
    <property type="molecule type" value="Genomic_DNA"/>
</dbReference>
<dbReference type="PIR" id="C65188">
    <property type="entry name" value="C65188"/>
</dbReference>
<dbReference type="RefSeq" id="NP_418278.1">
    <property type="nucleotide sequence ID" value="NC_000913.3"/>
</dbReference>
<dbReference type="RefSeq" id="WP_001295259.1">
    <property type="nucleotide sequence ID" value="NZ_STEB01000021.1"/>
</dbReference>
<dbReference type="PDB" id="6H6N">
    <property type="method" value="X-ray"/>
    <property type="resolution" value="2.12 A"/>
    <property type="chains" value="A/B=1-120"/>
</dbReference>
<dbReference type="PDB" id="6H6O">
    <property type="method" value="X-ray"/>
    <property type="resolution" value="1.70 A"/>
    <property type="chains" value="A/B=1-120"/>
</dbReference>
<dbReference type="PDB" id="6H6P">
    <property type="method" value="X-ray"/>
    <property type="resolution" value="2.50 A"/>
    <property type="chains" value="A/B/C/D=1-120"/>
</dbReference>
<dbReference type="PDBsum" id="6H6N"/>
<dbReference type="PDBsum" id="6H6O"/>
<dbReference type="PDBsum" id="6H6P"/>
<dbReference type="SMR" id="P0ADP7"/>
<dbReference type="BioGRID" id="4260947">
    <property type="interactions" value="2"/>
</dbReference>
<dbReference type="FunCoup" id="P0ADP7">
    <property type="interactions" value="18"/>
</dbReference>
<dbReference type="IntAct" id="P0ADP7">
    <property type="interactions" value="1"/>
</dbReference>
<dbReference type="STRING" id="511145.b3834"/>
<dbReference type="jPOST" id="P0ADP7"/>
<dbReference type="PaxDb" id="511145-b3834"/>
<dbReference type="EnsemblBacteria" id="AAC76837">
    <property type="protein sequence ID" value="AAC76837"/>
    <property type="gene ID" value="b3834"/>
</dbReference>
<dbReference type="GeneID" id="93778101"/>
<dbReference type="GeneID" id="948915"/>
<dbReference type="KEGG" id="ecj:JW3811"/>
<dbReference type="KEGG" id="eco:b3834"/>
<dbReference type="KEGG" id="ecoc:C3026_20745"/>
<dbReference type="PATRIC" id="fig|511145.12.peg.3950"/>
<dbReference type="EchoBASE" id="EB1442"/>
<dbReference type="eggNOG" id="COG3165">
    <property type="taxonomic scope" value="Bacteria"/>
</dbReference>
<dbReference type="HOGENOM" id="CLU_100130_2_0_6"/>
<dbReference type="InParanoid" id="P0ADP7"/>
<dbReference type="OMA" id="ELDWEYE"/>
<dbReference type="OrthoDB" id="5801225at2"/>
<dbReference type="PhylomeDB" id="P0ADP7"/>
<dbReference type="BioCyc" id="EcoCyc:EG11474-MONOMER"/>
<dbReference type="BioCyc" id="MetaCyc:EG11474-MONOMER"/>
<dbReference type="UniPathway" id="UPA00232"/>
<dbReference type="PRO" id="PR:P0ADP7"/>
<dbReference type="Proteomes" id="UP000000625">
    <property type="component" value="Chromosome"/>
</dbReference>
<dbReference type="GO" id="GO:0005737">
    <property type="term" value="C:cytoplasm"/>
    <property type="evidence" value="ECO:0007669"/>
    <property type="project" value="UniProtKB-SubCell"/>
</dbReference>
<dbReference type="GO" id="GO:0110142">
    <property type="term" value="C:ubiquinone biosynthesis complex"/>
    <property type="evidence" value="ECO:0000314"/>
    <property type="project" value="EcoCyc"/>
</dbReference>
<dbReference type="GO" id="GO:0042802">
    <property type="term" value="F:identical protein binding"/>
    <property type="evidence" value="ECO:0000314"/>
    <property type="project" value="EcoCyc"/>
</dbReference>
<dbReference type="GO" id="GO:0006744">
    <property type="term" value="P:ubiquinone biosynthetic process"/>
    <property type="evidence" value="ECO:0000315"/>
    <property type="project" value="EcoCyc"/>
</dbReference>
<dbReference type="HAMAP" id="MF_02215">
    <property type="entry name" value="UbiJ"/>
    <property type="match status" value="1"/>
</dbReference>
<dbReference type="InterPro" id="IPR003033">
    <property type="entry name" value="SCP2_sterol-bd_dom"/>
</dbReference>
<dbReference type="InterPro" id="IPR036527">
    <property type="entry name" value="SCP2_sterol-bd_dom_sf"/>
</dbReference>
<dbReference type="InterPro" id="IPR038989">
    <property type="entry name" value="UbiJ"/>
</dbReference>
<dbReference type="PANTHER" id="PTHR38693:SF1">
    <property type="entry name" value="UBIQUINONE BIOSYNTHESIS ACCESSORY FACTOR UBIJ"/>
    <property type="match status" value="1"/>
</dbReference>
<dbReference type="PANTHER" id="PTHR38693">
    <property type="entry name" value="UBIQUINONE BIOSYNTHESIS PROTEIN UBIJ"/>
    <property type="match status" value="1"/>
</dbReference>
<dbReference type="Pfam" id="PF02036">
    <property type="entry name" value="SCP2"/>
    <property type="match status" value="1"/>
</dbReference>
<dbReference type="SUPFAM" id="SSF55718">
    <property type="entry name" value="SCP-like"/>
    <property type="match status" value="1"/>
</dbReference>
<protein>
    <recommendedName>
        <fullName evidence="1 6">Ubiquinone biosynthesis accessory factor UbiJ</fullName>
    </recommendedName>
</protein>
<organism>
    <name type="scientific">Escherichia coli (strain K12)</name>
    <dbReference type="NCBI Taxonomy" id="83333"/>
    <lineage>
        <taxon>Bacteria</taxon>
        <taxon>Pseudomonadati</taxon>
        <taxon>Pseudomonadota</taxon>
        <taxon>Gammaproteobacteria</taxon>
        <taxon>Enterobacterales</taxon>
        <taxon>Enterobacteriaceae</taxon>
        <taxon>Escherichia</taxon>
    </lineage>
</organism>
<comment type="function">
    <text evidence="2 4">Required for ubiquinone (coenzyme Q) biosynthesis under aerobic conditions (PubMed:24142253, PubMed:30686758). Binds hydrophobic ubiquinone biosynthetic intermediates via its SCP2 domain and is essential for the stability of the Ubi complex (PubMed:30686758). May constitute a docking platform where Ubi enzymes assemble and access their SCP2-bound polyprenyl substrates (PubMed:30686758).</text>
</comment>
<comment type="pathway">
    <text evidence="1 2">Cofactor biosynthesis; ubiquinone biosynthesis.</text>
</comment>
<comment type="subunit">
    <text evidence="3 4">Component of the Ubi complex metabolon, which regroups five ubiquinone biosynthesis proteins (UbiE, UbiF, UbiG, UbiH and UbiI) and two accessory factors (UbiK and the lipid-binding protein UbiJ) (PubMed:30686758). Interacts with UbiK and forms a complex composed of 2 UbiK subunits and 1 UbiJ subunit. The UbiK-UbiJ complex interacts with palmitoleic acid (PubMed:28559279).</text>
</comment>
<comment type="subcellular location">
    <subcellularLocation>
        <location evidence="1 4">Cytoplasm</location>
    </subcellularLocation>
</comment>
<comment type="disruption phenotype">
    <text evidence="2">During aerobic growth, mutant is impaired for ubiquinone biosynthesis and for growth in rich medium, but it does not present any defect under anaerobic conditions.</text>
</comment>
<comment type="similarity">
    <text evidence="1 6">Belongs to the UbiJ family.</text>
</comment>
<feature type="chain" id="PRO_0000169668" description="Ubiquinone biosynthesis accessory factor UbiJ">
    <location>
        <begin position="1"/>
        <end position="201"/>
    </location>
</feature>
<feature type="domain" description="SCP2" evidence="1">
    <location>
        <begin position="15"/>
        <end position="112"/>
    </location>
</feature>
<feature type="sequence conflict" description="In Ref. 1; AAA67629." evidence="6" ref="1">
    <original>PAELLAPYTGDIAAEGISKAM</original>
    <variation>LRNCWPLIPVISPLKESAKP</variation>
    <location>
        <begin position="119"/>
        <end position="139"/>
    </location>
</feature>
<feature type="helix" evidence="10">
    <location>
        <begin position="3"/>
        <end position="19"/>
    </location>
</feature>
<feature type="helix" evidence="10">
    <location>
        <begin position="23"/>
        <end position="25"/>
    </location>
</feature>
<feature type="helix" evidence="10">
    <location>
        <begin position="26"/>
        <end position="30"/>
    </location>
</feature>
<feature type="turn" evidence="10">
    <location>
        <begin position="31"/>
        <end position="34"/>
    </location>
</feature>
<feature type="strand" evidence="10">
    <location>
        <begin position="36"/>
        <end position="41"/>
    </location>
</feature>
<feature type="strand" evidence="10">
    <location>
        <begin position="45"/>
        <end position="52"/>
    </location>
</feature>
<feature type="strand" evidence="10">
    <location>
        <begin position="57"/>
        <end position="61"/>
    </location>
</feature>
<feature type="strand" evidence="10">
    <location>
        <begin position="68"/>
        <end position="73"/>
    </location>
</feature>
<feature type="helix" evidence="10">
    <location>
        <begin position="75"/>
        <end position="80"/>
    </location>
</feature>
<feature type="helix" evidence="10">
    <location>
        <begin position="84"/>
        <end position="92"/>
    </location>
</feature>
<feature type="strand" evidence="10">
    <location>
        <begin position="95"/>
        <end position="100"/>
    </location>
</feature>
<feature type="helix" evidence="10">
    <location>
        <begin position="102"/>
        <end position="117"/>
    </location>
</feature>
<reference key="1">
    <citation type="journal article" date="1992" name="Science">
        <title>Analysis of the Escherichia coli genome: DNA sequence of the region from 84.5 to 86.5 minutes.</title>
        <authorList>
            <person name="Daniels D.L."/>
            <person name="Plunkett G. III"/>
            <person name="Burland V.D."/>
            <person name="Blattner F.R."/>
        </authorList>
    </citation>
    <scope>NUCLEOTIDE SEQUENCE [LARGE SCALE GENOMIC DNA]</scope>
    <source>
        <strain>K12 / MG1655 / ATCC 47076</strain>
    </source>
</reference>
<reference key="2">
    <citation type="journal article" date="1997" name="Science">
        <title>The complete genome sequence of Escherichia coli K-12.</title>
        <authorList>
            <person name="Blattner F.R."/>
            <person name="Plunkett G. III"/>
            <person name="Bloch C.A."/>
            <person name="Perna N.T."/>
            <person name="Burland V."/>
            <person name="Riley M."/>
            <person name="Collado-Vides J."/>
            <person name="Glasner J.D."/>
            <person name="Rode C.K."/>
            <person name="Mayhew G.F."/>
            <person name="Gregor J."/>
            <person name="Davis N.W."/>
            <person name="Kirkpatrick H.A."/>
            <person name="Goeden M.A."/>
            <person name="Rose D.J."/>
            <person name="Mau B."/>
            <person name="Shao Y."/>
        </authorList>
    </citation>
    <scope>NUCLEOTIDE SEQUENCE [LARGE SCALE GENOMIC DNA]</scope>
    <scope>SEQUENCE REVISION TO 119-139</scope>
    <source>
        <strain>K12 / MG1655 / ATCC 47076</strain>
    </source>
</reference>
<reference key="3">
    <citation type="journal article" date="2006" name="Mol. Syst. Biol.">
        <title>Highly accurate genome sequences of Escherichia coli K-12 strains MG1655 and W3110.</title>
        <authorList>
            <person name="Hayashi K."/>
            <person name="Morooka N."/>
            <person name="Yamamoto Y."/>
            <person name="Fujita K."/>
            <person name="Isono K."/>
            <person name="Choi S."/>
            <person name="Ohtsubo E."/>
            <person name="Baba T."/>
            <person name="Wanner B.L."/>
            <person name="Mori H."/>
            <person name="Horiuchi T."/>
        </authorList>
    </citation>
    <scope>NUCLEOTIDE SEQUENCE [LARGE SCALE GENOMIC DNA]</scope>
    <source>
        <strain>K12 / W3110 / ATCC 27325 / DSM 5911</strain>
    </source>
</reference>
<reference key="4">
    <citation type="journal article" date="2014" name="J. Bacteriol.">
        <title>ubiJ, a new gene required for aerobic growth and proliferation in macrophage, is involved in coenzyme Q biosynthesis in Escherichia coli and Salmonella enterica serovar Typhimurium.</title>
        <authorList>
            <person name="Aussel L."/>
            <person name="Loiseau L."/>
            <person name="Hajj Chehade M."/>
            <person name="Pocachard B."/>
            <person name="Fontecave M."/>
            <person name="Pierrel F."/>
            <person name="Barras F."/>
        </authorList>
    </citation>
    <scope>FUNCTION</scope>
    <scope>PATHWAY</scope>
    <scope>DISRUPTION PHENOTYPE</scope>
    <source>
        <strain>K12 / MG1655 / ATCC 47076</strain>
    </source>
</reference>
<reference key="5">
    <citation type="journal article" date="2017" name="J. Biol. Chem.">
        <title>The UbiK protein is an accessory factor necessary for bacterial ubiquinone (UQ) biosynthesis and forms a complex with the UQ biogenesis factor UbiJ.</title>
        <authorList>
            <person name="Loiseau L."/>
            <person name="Fyfe C."/>
            <person name="Aussel L."/>
            <person name="Hajj Chehade M."/>
            <person name="Hernandez S.B."/>
            <person name="Faivre B."/>
            <person name="Hamdane D."/>
            <person name="Mellot-Draznieks C."/>
            <person name="Rascalou B."/>
            <person name="Pelosi L."/>
            <person name="Velours C."/>
            <person name="Cornu D."/>
            <person name="Lombard M."/>
            <person name="Casadesus J."/>
            <person name="Pierrel F."/>
            <person name="Fontecave M."/>
            <person name="Barras F."/>
        </authorList>
    </citation>
    <scope>INTERACTION WITH UBIK</scope>
</reference>
<reference evidence="7 8 9" key="6">
    <citation type="journal article" date="2019" name="Cell Chem. Biol.">
        <title>A soluble metabolon synthesizes the isoprenoid lipid ubiquinone.</title>
        <authorList>
            <person name="Hajj Chehade M."/>
            <person name="Pelosi L."/>
            <person name="Fyfe C.D."/>
            <person name="Loiseau L."/>
            <person name="Rascalou B."/>
            <person name="Brugiere S."/>
            <person name="Kazemzadeh K."/>
            <person name="Vo C.D."/>
            <person name="Ciccone L."/>
            <person name="Aussel L."/>
            <person name="Coute Y."/>
            <person name="Fontecave M."/>
            <person name="Barras F."/>
            <person name="Lombard M."/>
            <person name="Pierrel F."/>
        </authorList>
    </citation>
    <scope>X-RAY CRYSTALLOGRAPHY (1.70 ANGSTROMS) OF 1-120</scope>
    <scope>FUNCTION</scope>
    <scope>SUBUNIT</scope>
    <scope>SUBCELLULAR LOCATION</scope>
</reference>
<sequence>MPFKPLVTAGIESLLNTFLYRSPALKTARSRLLGKVLRVEVKGFSTSLILVFSERQVDVLGEWAGDADCTVIAYASVLPKLRDRQQLTALIRSGELEVQGDIQVVQNFVALADLAEFDPAELLAPYTGDIAAEGISKAMRGGAKFLHHGIKRQQRYVAEAITEEWRMAPGPLEVAWFAEETAAVERAVDALTKRLEKLEAK</sequence>
<evidence type="ECO:0000255" key="1">
    <source>
        <dbReference type="HAMAP-Rule" id="MF_02215"/>
    </source>
</evidence>
<evidence type="ECO:0000269" key="2">
    <source>
    </source>
</evidence>
<evidence type="ECO:0000269" key="3">
    <source>
    </source>
</evidence>
<evidence type="ECO:0000269" key="4">
    <source>
    </source>
</evidence>
<evidence type="ECO:0000303" key="5">
    <source>
    </source>
</evidence>
<evidence type="ECO:0000305" key="6"/>
<evidence type="ECO:0007744" key="7">
    <source>
        <dbReference type="PDB" id="6H6N"/>
    </source>
</evidence>
<evidence type="ECO:0007744" key="8">
    <source>
        <dbReference type="PDB" id="6H6O"/>
    </source>
</evidence>
<evidence type="ECO:0007744" key="9">
    <source>
        <dbReference type="PDB" id="6H6P"/>
    </source>
</evidence>
<evidence type="ECO:0007829" key="10">
    <source>
        <dbReference type="PDB" id="6H6O"/>
    </source>
</evidence>